<gene>
    <name type="primary">PCDH17</name>
    <name type="synonym">PCDH68</name>
    <name type="synonym">PCH68</name>
</gene>
<dbReference type="EMBL" id="AF029343">
    <property type="protein sequence ID" value="AAB84144.1"/>
    <property type="molecule type" value="mRNA"/>
</dbReference>
<dbReference type="EMBL" id="AK289980">
    <property type="protein sequence ID" value="BAF82669.1"/>
    <property type="molecule type" value="mRNA"/>
</dbReference>
<dbReference type="EMBL" id="AL445216">
    <property type="status" value="NOT_ANNOTATED_CDS"/>
    <property type="molecule type" value="Genomic_DNA"/>
</dbReference>
<dbReference type="EMBL" id="AL445288">
    <property type="status" value="NOT_ANNOTATED_CDS"/>
    <property type="molecule type" value="Genomic_DNA"/>
</dbReference>
<dbReference type="EMBL" id="CH471124">
    <property type="protein sequence ID" value="EAW52060.1"/>
    <property type="molecule type" value="Genomic_DNA"/>
</dbReference>
<dbReference type="EMBL" id="BC028165">
    <property type="protein sequence ID" value="AAH28165.1"/>
    <property type="molecule type" value="mRNA"/>
</dbReference>
<dbReference type="CCDS" id="CCDS31986.1">
    <molecule id="O14917-1"/>
</dbReference>
<dbReference type="PIR" id="T09055">
    <property type="entry name" value="T09055"/>
</dbReference>
<dbReference type="RefSeq" id="NP_001035519.1">
    <molecule id="O14917-1"/>
    <property type="nucleotide sequence ID" value="NM_001040429.3"/>
</dbReference>
<dbReference type="RefSeq" id="XP_005266414.1">
    <molecule id="O14917-1"/>
    <property type="nucleotide sequence ID" value="XM_005266357.3"/>
</dbReference>
<dbReference type="RefSeq" id="XP_054230441.1">
    <molecule id="O14917-1"/>
    <property type="nucleotide sequence ID" value="XM_054374466.1"/>
</dbReference>
<dbReference type="PDB" id="6VFT">
    <property type="method" value="X-ray"/>
    <property type="resolution" value="3.71 A"/>
    <property type="chains" value="A/B/C/D=18-464"/>
</dbReference>
<dbReference type="PDBsum" id="6VFT"/>
<dbReference type="SMR" id="O14917"/>
<dbReference type="BioGRID" id="118101">
    <property type="interactions" value="39"/>
</dbReference>
<dbReference type="FunCoup" id="O14917">
    <property type="interactions" value="235"/>
</dbReference>
<dbReference type="IntAct" id="O14917">
    <property type="interactions" value="20"/>
</dbReference>
<dbReference type="STRING" id="9606.ENSP00000367151"/>
<dbReference type="GlyCosmos" id="O14917">
    <property type="glycosylation" value="7 sites, No reported glycans"/>
</dbReference>
<dbReference type="GlyGen" id="O14917">
    <property type="glycosylation" value="7 sites, 4 N-linked glycans (4 sites)"/>
</dbReference>
<dbReference type="iPTMnet" id="O14917"/>
<dbReference type="PhosphoSitePlus" id="O14917"/>
<dbReference type="SwissPalm" id="O14917"/>
<dbReference type="BioMuta" id="PCDH17"/>
<dbReference type="jPOST" id="O14917"/>
<dbReference type="MassIVE" id="O14917"/>
<dbReference type="PaxDb" id="9606-ENSP00000367151"/>
<dbReference type="PeptideAtlas" id="O14917"/>
<dbReference type="ProteomicsDB" id="48295">
    <molecule id="O14917-1"/>
</dbReference>
<dbReference type="ProteomicsDB" id="48296">
    <molecule id="O14917-2"/>
</dbReference>
<dbReference type="Antibodypedia" id="9916">
    <property type="antibodies" value="153 antibodies from 25 providers"/>
</dbReference>
<dbReference type="DNASU" id="27253"/>
<dbReference type="Ensembl" id="ENST00000377918.8">
    <molecule id="O14917-1"/>
    <property type="protein sequence ID" value="ENSP00000367151.3"/>
    <property type="gene ID" value="ENSG00000118946.12"/>
</dbReference>
<dbReference type="Ensembl" id="ENST00000484979.5">
    <molecule id="O14917-2"/>
    <property type="protein sequence ID" value="ENSP00000432899.1"/>
    <property type="gene ID" value="ENSG00000118946.12"/>
</dbReference>
<dbReference type="GeneID" id="27253"/>
<dbReference type="KEGG" id="hsa:27253"/>
<dbReference type="MANE-Select" id="ENST00000377918.8">
    <property type="protein sequence ID" value="ENSP00000367151.3"/>
    <property type="RefSeq nucleotide sequence ID" value="NM_001040429.3"/>
    <property type="RefSeq protein sequence ID" value="NP_001035519.1"/>
</dbReference>
<dbReference type="UCSC" id="uc001vhq.2">
    <molecule id="O14917-1"/>
    <property type="organism name" value="human"/>
</dbReference>
<dbReference type="AGR" id="HGNC:14267"/>
<dbReference type="CTD" id="27253"/>
<dbReference type="DisGeNET" id="27253"/>
<dbReference type="GeneCards" id="PCDH17"/>
<dbReference type="HGNC" id="HGNC:14267">
    <property type="gene designation" value="PCDH17"/>
</dbReference>
<dbReference type="HPA" id="ENSG00000118946">
    <property type="expression patterns" value="Tissue enhanced (brain, lung, lymphoid tissue)"/>
</dbReference>
<dbReference type="MIM" id="611760">
    <property type="type" value="gene"/>
</dbReference>
<dbReference type="neXtProt" id="NX_O14917"/>
<dbReference type="OpenTargets" id="ENSG00000118946"/>
<dbReference type="PharmGKB" id="PA33001"/>
<dbReference type="VEuPathDB" id="HostDB:ENSG00000118946"/>
<dbReference type="eggNOG" id="KOG3594">
    <property type="taxonomic scope" value="Eukaryota"/>
</dbReference>
<dbReference type="GeneTree" id="ENSGT00940000156894"/>
<dbReference type="HOGENOM" id="CLU_006480_1_1_1"/>
<dbReference type="InParanoid" id="O14917"/>
<dbReference type="OMA" id="CYVPDRI"/>
<dbReference type="OrthoDB" id="6252479at2759"/>
<dbReference type="PAN-GO" id="O14917">
    <property type="GO annotations" value="2 GO annotations based on evolutionary models"/>
</dbReference>
<dbReference type="PhylomeDB" id="O14917"/>
<dbReference type="TreeFam" id="TF352008"/>
<dbReference type="PathwayCommons" id="O14917"/>
<dbReference type="SignaLink" id="O14917"/>
<dbReference type="BioGRID-ORCS" id="27253">
    <property type="hits" value="10 hits in 1150 CRISPR screens"/>
</dbReference>
<dbReference type="ChiTaRS" id="PCDH17">
    <property type="organism name" value="human"/>
</dbReference>
<dbReference type="GeneWiki" id="PCDH17"/>
<dbReference type="GenomeRNAi" id="27253"/>
<dbReference type="Pharos" id="O14917">
    <property type="development level" value="Tbio"/>
</dbReference>
<dbReference type="PRO" id="PR:O14917"/>
<dbReference type="Proteomes" id="UP000005640">
    <property type="component" value="Chromosome 13"/>
</dbReference>
<dbReference type="RNAct" id="O14917">
    <property type="molecule type" value="protein"/>
</dbReference>
<dbReference type="Bgee" id="ENSG00000118946">
    <property type="expression patterns" value="Expressed in endothelial cell and 178 other cell types or tissues"/>
</dbReference>
<dbReference type="ExpressionAtlas" id="O14917">
    <property type="expression patterns" value="baseline and differential"/>
</dbReference>
<dbReference type="GO" id="GO:0098982">
    <property type="term" value="C:GABA-ergic synapse"/>
    <property type="evidence" value="ECO:0007669"/>
    <property type="project" value="Ensembl"/>
</dbReference>
<dbReference type="GO" id="GO:0098978">
    <property type="term" value="C:glutamatergic synapse"/>
    <property type="evidence" value="ECO:0007669"/>
    <property type="project" value="Ensembl"/>
</dbReference>
<dbReference type="GO" id="GO:0005886">
    <property type="term" value="C:plasma membrane"/>
    <property type="evidence" value="ECO:0000318"/>
    <property type="project" value="GO_Central"/>
</dbReference>
<dbReference type="GO" id="GO:0045211">
    <property type="term" value="C:postsynaptic membrane"/>
    <property type="evidence" value="ECO:0007669"/>
    <property type="project" value="Ensembl"/>
</dbReference>
<dbReference type="GO" id="GO:0042734">
    <property type="term" value="C:presynaptic membrane"/>
    <property type="evidence" value="ECO:0007669"/>
    <property type="project" value="Ensembl"/>
</dbReference>
<dbReference type="GO" id="GO:0005509">
    <property type="term" value="F:calcium ion binding"/>
    <property type="evidence" value="ECO:0007669"/>
    <property type="project" value="InterPro"/>
</dbReference>
<dbReference type="GO" id="GO:0030534">
    <property type="term" value="P:adult behavior"/>
    <property type="evidence" value="ECO:0007669"/>
    <property type="project" value="Ensembl"/>
</dbReference>
<dbReference type="GO" id="GO:0007155">
    <property type="term" value="P:cell adhesion"/>
    <property type="evidence" value="ECO:0000318"/>
    <property type="project" value="GO_Central"/>
</dbReference>
<dbReference type="GO" id="GO:0007156">
    <property type="term" value="P:homophilic cell adhesion via plasma membrane adhesion molecules"/>
    <property type="evidence" value="ECO:0007669"/>
    <property type="project" value="InterPro"/>
</dbReference>
<dbReference type="GO" id="GO:0050805">
    <property type="term" value="P:negative regulation of synaptic transmission"/>
    <property type="evidence" value="ECO:0007669"/>
    <property type="project" value="Ensembl"/>
</dbReference>
<dbReference type="GO" id="GO:1904071">
    <property type="term" value="P:presynaptic active zone assembly"/>
    <property type="evidence" value="ECO:0007669"/>
    <property type="project" value="Ensembl"/>
</dbReference>
<dbReference type="GO" id="GO:2000807">
    <property type="term" value="P:regulation of synaptic vesicle clustering"/>
    <property type="evidence" value="ECO:0007669"/>
    <property type="project" value="Ensembl"/>
</dbReference>
<dbReference type="GO" id="GO:0099560">
    <property type="term" value="P:synaptic membrane adhesion"/>
    <property type="evidence" value="ECO:0007669"/>
    <property type="project" value="Ensembl"/>
</dbReference>
<dbReference type="CDD" id="cd11304">
    <property type="entry name" value="Cadherin_repeat"/>
    <property type="match status" value="6"/>
</dbReference>
<dbReference type="FunFam" id="2.60.40.60:FF:000105">
    <property type="entry name" value="Protocadherin 17"/>
    <property type="match status" value="1"/>
</dbReference>
<dbReference type="FunFam" id="2.60.40.60:FF:000121">
    <property type="entry name" value="Protocadherin 17"/>
    <property type="match status" value="1"/>
</dbReference>
<dbReference type="FunFam" id="2.60.40.60:FF:000001">
    <property type="entry name" value="Protocadherin alpha 2"/>
    <property type="match status" value="1"/>
</dbReference>
<dbReference type="FunFam" id="2.60.40.60:FF:000002">
    <property type="entry name" value="Protocadherin alpha 2"/>
    <property type="match status" value="1"/>
</dbReference>
<dbReference type="FunFam" id="2.60.40.60:FF:000007">
    <property type="entry name" value="Protocadherin alpha 2"/>
    <property type="match status" value="1"/>
</dbReference>
<dbReference type="FunFam" id="2.60.40.60:FF:000042">
    <property type="entry name" value="protocadherin-19 isoform X1"/>
    <property type="match status" value="1"/>
</dbReference>
<dbReference type="Gene3D" id="2.60.40.60">
    <property type="entry name" value="Cadherins"/>
    <property type="match status" value="6"/>
</dbReference>
<dbReference type="InterPro" id="IPR002126">
    <property type="entry name" value="Cadherin-like_dom"/>
</dbReference>
<dbReference type="InterPro" id="IPR015919">
    <property type="entry name" value="Cadherin-like_sf"/>
</dbReference>
<dbReference type="InterPro" id="IPR020894">
    <property type="entry name" value="Cadherin_CS"/>
</dbReference>
<dbReference type="InterPro" id="IPR013164">
    <property type="entry name" value="Cadherin_N"/>
</dbReference>
<dbReference type="InterPro" id="IPR050174">
    <property type="entry name" value="Protocadherin/Cadherin-CA"/>
</dbReference>
<dbReference type="PANTHER" id="PTHR24028">
    <property type="entry name" value="CADHERIN-87A"/>
    <property type="match status" value="1"/>
</dbReference>
<dbReference type="PANTHER" id="PTHR24028:SF41">
    <property type="entry name" value="PROTOCADHERIN-17"/>
    <property type="match status" value="1"/>
</dbReference>
<dbReference type="Pfam" id="PF00028">
    <property type="entry name" value="Cadherin"/>
    <property type="match status" value="5"/>
</dbReference>
<dbReference type="Pfam" id="PF08266">
    <property type="entry name" value="Cadherin_2"/>
    <property type="match status" value="1"/>
</dbReference>
<dbReference type="PRINTS" id="PR00205">
    <property type="entry name" value="CADHERIN"/>
</dbReference>
<dbReference type="SMART" id="SM00112">
    <property type="entry name" value="CA"/>
    <property type="match status" value="6"/>
</dbReference>
<dbReference type="SUPFAM" id="SSF49313">
    <property type="entry name" value="Cadherin-like"/>
    <property type="match status" value="6"/>
</dbReference>
<dbReference type="PROSITE" id="PS00232">
    <property type="entry name" value="CADHERIN_1"/>
    <property type="match status" value="5"/>
</dbReference>
<dbReference type="PROSITE" id="PS50268">
    <property type="entry name" value="CADHERIN_2"/>
    <property type="match status" value="6"/>
</dbReference>
<name>PCD17_HUMAN</name>
<reference key="1">
    <citation type="submission" date="1997-10" db="EMBL/GenBank/DDBJ databases">
        <title>Human protocadherin 68.</title>
        <authorList>
            <person name="Jin P."/>
            <person name="Xu H."/>
            <person name="Israel D."/>
        </authorList>
    </citation>
    <scope>NUCLEOTIDE SEQUENCE [MRNA] (ISOFORM 2)</scope>
</reference>
<reference key="2">
    <citation type="journal article" date="2004" name="Nat. Genet.">
        <title>Complete sequencing and characterization of 21,243 full-length human cDNAs.</title>
        <authorList>
            <person name="Ota T."/>
            <person name="Suzuki Y."/>
            <person name="Nishikawa T."/>
            <person name="Otsuki T."/>
            <person name="Sugiyama T."/>
            <person name="Irie R."/>
            <person name="Wakamatsu A."/>
            <person name="Hayashi K."/>
            <person name="Sato H."/>
            <person name="Nagai K."/>
            <person name="Kimura K."/>
            <person name="Makita H."/>
            <person name="Sekine M."/>
            <person name="Obayashi M."/>
            <person name="Nishi T."/>
            <person name="Shibahara T."/>
            <person name="Tanaka T."/>
            <person name="Ishii S."/>
            <person name="Yamamoto J."/>
            <person name="Saito K."/>
            <person name="Kawai Y."/>
            <person name="Isono Y."/>
            <person name="Nakamura Y."/>
            <person name="Nagahari K."/>
            <person name="Murakami K."/>
            <person name="Yasuda T."/>
            <person name="Iwayanagi T."/>
            <person name="Wagatsuma M."/>
            <person name="Shiratori A."/>
            <person name="Sudo H."/>
            <person name="Hosoiri T."/>
            <person name="Kaku Y."/>
            <person name="Kodaira H."/>
            <person name="Kondo H."/>
            <person name="Sugawara M."/>
            <person name="Takahashi M."/>
            <person name="Kanda K."/>
            <person name="Yokoi T."/>
            <person name="Furuya T."/>
            <person name="Kikkawa E."/>
            <person name="Omura Y."/>
            <person name="Abe K."/>
            <person name="Kamihara K."/>
            <person name="Katsuta N."/>
            <person name="Sato K."/>
            <person name="Tanikawa M."/>
            <person name="Yamazaki M."/>
            <person name="Ninomiya K."/>
            <person name="Ishibashi T."/>
            <person name="Yamashita H."/>
            <person name="Murakawa K."/>
            <person name="Fujimori K."/>
            <person name="Tanai H."/>
            <person name="Kimata M."/>
            <person name="Watanabe M."/>
            <person name="Hiraoka S."/>
            <person name="Chiba Y."/>
            <person name="Ishida S."/>
            <person name="Ono Y."/>
            <person name="Takiguchi S."/>
            <person name="Watanabe S."/>
            <person name="Yosida M."/>
            <person name="Hotuta T."/>
            <person name="Kusano J."/>
            <person name="Kanehori K."/>
            <person name="Takahashi-Fujii A."/>
            <person name="Hara H."/>
            <person name="Tanase T.-O."/>
            <person name="Nomura Y."/>
            <person name="Togiya S."/>
            <person name="Komai F."/>
            <person name="Hara R."/>
            <person name="Takeuchi K."/>
            <person name="Arita M."/>
            <person name="Imose N."/>
            <person name="Musashino K."/>
            <person name="Yuuki H."/>
            <person name="Oshima A."/>
            <person name="Sasaki N."/>
            <person name="Aotsuka S."/>
            <person name="Yoshikawa Y."/>
            <person name="Matsunawa H."/>
            <person name="Ichihara T."/>
            <person name="Shiohata N."/>
            <person name="Sano S."/>
            <person name="Moriya S."/>
            <person name="Momiyama H."/>
            <person name="Satoh N."/>
            <person name="Takami S."/>
            <person name="Terashima Y."/>
            <person name="Suzuki O."/>
            <person name="Nakagawa S."/>
            <person name="Senoh A."/>
            <person name="Mizoguchi H."/>
            <person name="Goto Y."/>
            <person name="Shimizu F."/>
            <person name="Wakebe H."/>
            <person name="Hishigaki H."/>
            <person name="Watanabe T."/>
            <person name="Sugiyama A."/>
            <person name="Takemoto M."/>
            <person name="Kawakami B."/>
            <person name="Yamazaki M."/>
            <person name="Watanabe K."/>
            <person name="Kumagai A."/>
            <person name="Itakura S."/>
            <person name="Fukuzumi Y."/>
            <person name="Fujimori Y."/>
            <person name="Komiyama M."/>
            <person name="Tashiro H."/>
            <person name="Tanigami A."/>
            <person name="Fujiwara T."/>
            <person name="Ono T."/>
            <person name="Yamada K."/>
            <person name="Fujii Y."/>
            <person name="Ozaki K."/>
            <person name="Hirao M."/>
            <person name="Ohmori Y."/>
            <person name="Kawabata A."/>
            <person name="Hikiji T."/>
            <person name="Kobatake N."/>
            <person name="Inagaki H."/>
            <person name="Ikema Y."/>
            <person name="Okamoto S."/>
            <person name="Okitani R."/>
            <person name="Kawakami T."/>
            <person name="Noguchi S."/>
            <person name="Itoh T."/>
            <person name="Shigeta K."/>
            <person name="Senba T."/>
            <person name="Matsumura K."/>
            <person name="Nakajima Y."/>
            <person name="Mizuno T."/>
            <person name="Morinaga M."/>
            <person name="Sasaki M."/>
            <person name="Togashi T."/>
            <person name="Oyama M."/>
            <person name="Hata H."/>
            <person name="Watanabe M."/>
            <person name="Komatsu T."/>
            <person name="Mizushima-Sugano J."/>
            <person name="Satoh T."/>
            <person name="Shirai Y."/>
            <person name="Takahashi Y."/>
            <person name="Nakagawa K."/>
            <person name="Okumura K."/>
            <person name="Nagase T."/>
            <person name="Nomura N."/>
            <person name="Kikuchi H."/>
            <person name="Masuho Y."/>
            <person name="Yamashita R."/>
            <person name="Nakai K."/>
            <person name="Yada T."/>
            <person name="Nakamura Y."/>
            <person name="Ohara O."/>
            <person name="Isogai T."/>
            <person name="Sugano S."/>
        </authorList>
    </citation>
    <scope>NUCLEOTIDE SEQUENCE [LARGE SCALE MRNA] (ISOFORM 1)</scope>
    <source>
        <tissue>Hippocampus</tissue>
    </source>
</reference>
<reference key="3">
    <citation type="journal article" date="2004" name="Nature">
        <title>The DNA sequence and analysis of human chromosome 13.</title>
        <authorList>
            <person name="Dunham A."/>
            <person name="Matthews L.H."/>
            <person name="Burton J."/>
            <person name="Ashurst J.L."/>
            <person name="Howe K.L."/>
            <person name="Ashcroft K.J."/>
            <person name="Beare D.M."/>
            <person name="Burford D.C."/>
            <person name="Hunt S.E."/>
            <person name="Griffiths-Jones S."/>
            <person name="Jones M.C."/>
            <person name="Keenan S.J."/>
            <person name="Oliver K."/>
            <person name="Scott C.E."/>
            <person name="Ainscough R."/>
            <person name="Almeida J.P."/>
            <person name="Ambrose K.D."/>
            <person name="Andrews D.T."/>
            <person name="Ashwell R.I.S."/>
            <person name="Babbage A.K."/>
            <person name="Bagguley C.L."/>
            <person name="Bailey J."/>
            <person name="Bannerjee R."/>
            <person name="Barlow K.F."/>
            <person name="Bates K."/>
            <person name="Beasley H."/>
            <person name="Bird C.P."/>
            <person name="Bray-Allen S."/>
            <person name="Brown A.J."/>
            <person name="Brown J.Y."/>
            <person name="Burrill W."/>
            <person name="Carder C."/>
            <person name="Carter N.P."/>
            <person name="Chapman J.C."/>
            <person name="Clamp M.E."/>
            <person name="Clark S.Y."/>
            <person name="Clarke G."/>
            <person name="Clee C.M."/>
            <person name="Clegg S.C."/>
            <person name="Cobley V."/>
            <person name="Collins J.E."/>
            <person name="Corby N."/>
            <person name="Coville G.J."/>
            <person name="Deloukas P."/>
            <person name="Dhami P."/>
            <person name="Dunham I."/>
            <person name="Dunn M."/>
            <person name="Earthrowl M.E."/>
            <person name="Ellington A.G."/>
            <person name="Faulkner L."/>
            <person name="Frankish A.G."/>
            <person name="Frankland J."/>
            <person name="French L."/>
            <person name="Garner P."/>
            <person name="Garnett J."/>
            <person name="Gilbert J.G.R."/>
            <person name="Gilson C.J."/>
            <person name="Ghori J."/>
            <person name="Grafham D.V."/>
            <person name="Gribble S.M."/>
            <person name="Griffiths C."/>
            <person name="Hall R.E."/>
            <person name="Hammond S."/>
            <person name="Harley J.L."/>
            <person name="Hart E.A."/>
            <person name="Heath P.D."/>
            <person name="Howden P.J."/>
            <person name="Huckle E.J."/>
            <person name="Hunt P.J."/>
            <person name="Hunt A.R."/>
            <person name="Johnson C."/>
            <person name="Johnson D."/>
            <person name="Kay M."/>
            <person name="Kimberley A.M."/>
            <person name="King A."/>
            <person name="Laird G.K."/>
            <person name="Langford C.J."/>
            <person name="Lawlor S."/>
            <person name="Leongamornlert D.A."/>
            <person name="Lloyd D.M."/>
            <person name="Lloyd C."/>
            <person name="Loveland J.E."/>
            <person name="Lovell J."/>
            <person name="Martin S."/>
            <person name="Mashreghi-Mohammadi M."/>
            <person name="McLaren S.J."/>
            <person name="McMurray A."/>
            <person name="Milne S."/>
            <person name="Moore M.J.F."/>
            <person name="Nickerson T."/>
            <person name="Palmer S.A."/>
            <person name="Pearce A.V."/>
            <person name="Peck A.I."/>
            <person name="Pelan S."/>
            <person name="Phillimore B."/>
            <person name="Porter K.M."/>
            <person name="Rice C.M."/>
            <person name="Searle S."/>
            <person name="Sehra H.K."/>
            <person name="Shownkeen R."/>
            <person name="Skuce C.D."/>
            <person name="Smith M."/>
            <person name="Steward C.A."/>
            <person name="Sycamore N."/>
            <person name="Tester J."/>
            <person name="Thomas D.W."/>
            <person name="Tracey A."/>
            <person name="Tromans A."/>
            <person name="Tubby B."/>
            <person name="Wall M."/>
            <person name="Wallis J.M."/>
            <person name="West A.P."/>
            <person name="Whitehead S.L."/>
            <person name="Willey D.L."/>
            <person name="Wilming L."/>
            <person name="Wray P.W."/>
            <person name="Wright M.W."/>
            <person name="Young L."/>
            <person name="Coulson A."/>
            <person name="Durbin R.M."/>
            <person name="Hubbard T."/>
            <person name="Sulston J.E."/>
            <person name="Beck S."/>
            <person name="Bentley D.R."/>
            <person name="Rogers J."/>
            <person name="Ross M.T."/>
        </authorList>
    </citation>
    <scope>NUCLEOTIDE SEQUENCE [LARGE SCALE GENOMIC DNA]</scope>
</reference>
<reference key="4">
    <citation type="submission" date="2005-07" db="EMBL/GenBank/DDBJ databases">
        <authorList>
            <person name="Mural R.J."/>
            <person name="Istrail S."/>
            <person name="Sutton G.G."/>
            <person name="Florea L."/>
            <person name="Halpern A.L."/>
            <person name="Mobarry C.M."/>
            <person name="Lippert R."/>
            <person name="Walenz B."/>
            <person name="Shatkay H."/>
            <person name="Dew I."/>
            <person name="Miller J.R."/>
            <person name="Flanigan M.J."/>
            <person name="Edwards N.J."/>
            <person name="Bolanos R."/>
            <person name="Fasulo D."/>
            <person name="Halldorsson B.V."/>
            <person name="Hannenhalli S."/>
            <person name="Turner R."/>
            <person name="Yooseph S."/>
            <person name="Lu F."/>
            <person name="Nusskern D.R."/>
            <person name="Shue B.C."/>
            <person name="Zheng X.H."/>
            <person name="Zhong F."/>
            <person name="Delcher A.L."/>
            <person name="Huson D.H."/>
            <person name="Kravitz S.A."/>
            <person name="Mouchard L."/>
            <person name="Reinert K."/>
            <person name="Remington K.A."/>
            <person name="Clark A.G."/>
            <person name="Waterman M.S."/>
            <person name="Eichler E.E."/>
            <person name="Adams M.D."/>
            <person name="Hunkapiller M.W."/>
            <person name="Myers E.W."/>
            <person name="Venter J.C."/>
        </authorList>
    </citation>
    <scope>NUCLEOTIDE SEQUENCE [LARGE SCALE GENOMIC DNA]</scope>
</reference>
<reference key="5">
    <citation type="journal article" date="2004" name="Genome Res.">
        <title>The status, quality, and expansion of the NIH full-length cDNA project: the Mammalian Gene Collection (MGC).</title>
        <authorList>
            <consortium name="The MGC Project Team"/>
        </authorList>
    </citation>
    <scope>NUCLEOTIDE SEQUENCE [LARGE SCALE MRNA] (ISOFORM 1)</scope>
    <source>
        <tissue>Brain</tissue>
    </source>
</reference>
<reference key="6">
    <citation type="journal article" date="2007" name="Proc. Natl. Acad. Sci. U.S.A.">
        <title>Genome-wide analyses of human perisylvian cerebral cortical patterning.</title>
        <authorList>
            <person name="Abrahams B.S."/>
            <person name="Tentler D."/>
            <person name="Perederiy J.V."/>
            <person name="Oldham M.C."/>
            <person name="Coppola G."/>
            <person name="Geschwind D.H."/>
        </authorList>
    </citation>
    <scope>DEVELOPMENTAL STAGE</scope>
</reference>
<feature type="signal peptide" evidence="2">
    <location>
        <begin position="1"/>
        <end position="17"/>
    </location>
</feature>
<feature type="chain" id="PRO_0000004001" description="Protocadherin-17">
    <location>
        <begin position="18"/>
        <end position="1159"/>
    </location>
</feature>
<feature type="topological domain" description="Extracellular" evidence="2">
    <location>
        <begin position="18"/>
        <end position="707"/>
    </location>
</feature>
<feature type="transmembrane region" description="Helical" evidence="2">
    <location>
        <begin position="708"/>
        <end position="728"/>
    </location>
</feature>
<feature type="topological domain" description="Cytoplasmic" evidence="2">
    <location>
        <begin position="729"/>
        <end position="1159"/>
    </location>
</feature>
<feature type="domain" description="Cadherin 1" evidence="3">
    <location>
        <begin position="18"/>
        <end position="132"/>
    </location>
</feature>
<feature type="domain" description="Cadherin 2" evidence="3">
    <location>
        <begin position="133"/>
        <end position="243"/>
    </location>
</feature>
<feature type="domain" description="Cadherin 3" evidence="3">
    <location>
        <begin position="244"/>
        <end position="351"/>
    </location>
</feature>
<feature type="domain" description="Cadherin 4" evidence="3">
    <location>
        <begin position="353"/>
        <end position="472"/>
    </location>
</feature>
<feature type="domain" description="Cadherin 5" evidence="3">
    <location>
        <begin position="473"/>
        <end position="583"/>
    </location>
</feature>
<feature type="domain" description="Cadherin 6" evidence="3">
    <location>
        <begin position="589"/>
        <end position="695"/>
    </location>
</feature>
<feature type="region of interest" description="Disordered" evidence="4">
    <location>
        <begin position="858"/>
        <end position="909"/>
    </location>
</feature>
<feature type="region of interest" description="Disordered" evidence="4">
    <location>
        <begin position="1108"/>
        <end position="1132"/>
    </location>
</feature>
<feature type="short sequence motif" description="Cell attachment site" evidence="2">
    <location>
        <begin position="186"/>
        <end position="188"/>
    </location>
</feature>
<feature type="compositionally biased region" description="Polar residues" evidence="4">
    <location>
        <begin position="867"/>
        <end position="879"/>
    </location>
</feature>
<feature type="compositionally biased region" description="Basic and acidic residues" evidence="4">
    <location>
        <begin position="880"/>
        <end position="895"/>
    </location>
</feature>
<feature type="compositionally biased region" description="Basic and acidic residues" evidence="4">
    <location>
        <begin position="1120"/>
        <end position="1132"/>
    </location>
</feature>
<feature type="glycosylation site" description="N-linked (GlcNAc...) asparagine" evidence="2">
    <location>
        <position position="22"/>
    </location>
</feature>
<feature type="glycosylation site" description="N-linked (GlcNAc...) asparagine" evidence="2">
    <location>
        <position position="266"/>
    </location>
</feature>
<feature type="glycosylation site" description="N-linked (GlcNAc...) asparagine" evidence="2">
    <location>
        <position position="439"/>
    </location>
</feature>
<feature type="glycosylation site" description="N-linked (GlcNAc...) asparagine" evidence="2">
    <location>
        <position position="453"/>
    </location>
</feature>
<feature type="glycosylation site" description="N-linked (GlcNAc...) asparagine" evidence="2">
    <location>
        <position position="504"/>
    </location>
</feature>
<feature type="glycosylation site" description="N-linked (GlcNAc...) asparagine" evidence="2">
    <location>
        <position position="566"/>
    </location>
</feature>
<feature type="glycosylation site" description="N-linked (GlcNAc...) asparagine" evidence="2">
    <location>
        <position position="590"/>
    </location>
</feature>
<feature type="splice variant" id="VSP_021581" description="In isoform 2." evidence="6">
    <original>SSTFKDPERASLRD</original>
    <variation>ISVAPRLRTQKEPA</variation>
    <location>
        <begin position="876"/>
        <end position="889"/>
    </location>
</feature>
<feature type="splice variant" id="VSP_021582" description="In isoform 2." evidence="6">
    <location>
        <begin position="890"/>
        <end position="1159"/>
    </location>
</feature>
<feature type="sequence conflict" description="In Ref. 1; AAB84144." evidence="7" ref="1">
    <original>M</original>
    <variation>L</variation>
    <location>
        <position position="139"/>
    </location>
</feature>
<feature type="sequence conflict" description="In Ref. 1; AAB84144." evidence="7" ref="1">
    <original>A</original>
    <variation>T</variation>
    <location>
        <position position="256"/>
    </location>
</feature>
<feature type="sequence conflict" description="In Ref. 1; AAB84144." evidence="7" ref="1">
    <original>P</original>
    <variation>L</variation>
    <location>
        <position position="330"/>
    </location>
</feature>
<feature type="sequence conflict" description="In Ref. 1; AAB84144." evidence="7" ref="1">
    <original>L</original>
    <variation>M</variation>
    <location>
        <position position="430"/>
    </location>
</feature>
<feature type="sequence conflict" description="In Ref. 1; AAB84144." evidence="7" ref="1">
    <original>E</original>
    <variation>D</variation>
    <location>
        <position position="489"/>
    </location>
</feature>
<comment type="function">
    <text>Potential calcium-dependent cell-adhesion protein.</text>
</comment>
<comment type="interaction">
    <interactant intactId="EBI-947061">
        <id>O14917</id>
    </interactant>
    <interactant intactId="EBI-739485">
        <id>Q9Y3Q8</id>
        <label>TSC22D4</label>
    </interactant>
    <organismsDiffer>false</organismsDiffer>
    <experiments>3</experiments>
</comment>
<comment type="interaction">
    <interactant intactId="EBI-947061">
        <id>O14917</id>
    </interactant>
    <interactant intactId="EBI-12111538">
        <id>Q8IY57-5</id>
        <label>YAF2</label>
    </interactant>
    <organismsDiffer>false</organismsDiffer>
    <experiments>3</experiments>
</comment>
<comment type="subcellular location">
    <subcellularLocation>
        <location evidence="1">Cell membrane</location>
        <topology evidence="1">Single-pass type I membrane protein</topology>
    </subcellularLocation>
</comment>
<comment type="alternative products">
    <event type="alternative splicing"/>
    <isoform>
        <id>O14917-1</id>
        <name>1</name>
        <sequence type="displayed"/>
    </isoform>
    <isoform>
        <id>O14917-2</id>
        <name>2</name>
        <sequence type="described" ref="VSP_021581 VSP_021582"/>
    </isoform>
</comment>
<comment type="developmental stage">
    <text evidence="5">During midgestation, enriched in the frontal and anterior temporal cortices. Expressed at high levels in the exterior margins of the thalamus, ventromedial striatal neuroepithelium and anterior cingulate.</text>
</comment>
<comment type="miscellaneous">
    <molecule>Isoform 2</molecule>
    <text evidence="7">May be produced at very low levels due to a premature stop codon in the mRNA, leading to nonsense-mediated mRNA decay.</text>
</comment>
<organism>
    <name type="scientific">Homo sapiens</name>
    <name type="common">Human</name>
    <dbReference type="NCBI Taxonomy" id="9606"/>
    <lineage>
        <taxon>Eukaryota</taxon>
        <taxon>Metazoa</taxon>
        <taxon>Chordata</taxon>
        <taxon>Craniata</taxon>
        <taxon>Vertebrata</taxon>
        <taxon>Euteleostomi</taxon>
        <taxon>Mammalia</taxon>
        <taxon>Eutheria</taxon>
        <taxon>Euarchontoglires</taxon>
        <taxon>Primates</taxon>
        <taxon>Haplorrhini</taxon>
        <taxon>Catarrhini</taxon>
        <taxon>Hominidae</taxon>
        <taxon>Homo</taxon>
    </lineage>
</organism>
<protein>
    <recommendedName>
        <fullName>Protocadherin-17</fullName>
    </recommendedName>
    <alternativeName>
        <fullName>Protocadherin-68</fullName>
    </alternativeName>
</protein>
<sequence>MYLSICCCFLLWAPALTLKNLNYSVPEEQGAGTVIGNIGRDARLQPGLPPAERGGGGRSKSGSYRVLENSAPHLLDVDADSGLLYTKQRIDRESLCRHNAKCQLSLEVFANDKEICMIKVEIQDINDNAPSFSSDQIEMDISENAAPGTRFPLTSAHDPDAGENGLRTYLLTRDDHGLFGLDVKSRGDGTKFPELVIQKALDREQQNHHTLVLTALDGGEPPRSATVQINVKVIDSNDNSPVFEAPSYLVELPENAPLGTVVIDLNATDADEGPNGEVLYSFSSYVPDRVRELFSIDPKTGLIRVKGNLDYEENGMLEIDVQARDLGPNPIPAHCKVTVKLIDRNDNAPSIGFVSVRQGALSEAAPPGTVIALVRVTDRDSGKNGQLQCRVLGGGGTGGGGGLGGPGGSVPFKLEENYDNFYTVVTDRPLDRETQDEYNVTIVARDGGSPPLNSTKSFAIKILDENDNPPRFTKGLYVLQVHENNIPGEYLGSVLAQDPDLGQNGTVSYSILPSHIGDVSIYTYVSVNPTNGAIYALRSFNFEQTKAFEFKVLAKDSGAPAHLESNATVRVTVLDVNDNAPVIVLPTLQNDTAELQVPRNAGLGYLVSTVRALDSDFGESGRLTYEIVDGNDDHLFEIDPSSGEIRTLHPFWEDVTPVVELVVKVTDHGKPTLSAVAKLIIRSVSGSLPEGVPRVNGEQHHWDMSLPLIVTLSTISIILLAAMITIAVKCKRENKEIRTYNCRIAEYSHPQLGGGKGKKKKINKNDIMLVQSEVEERNAMNVMNVVSSPSLATSPMYFDYQTRLPLSSPRSEVMYLKPASNNLTVPQGHAGCHTSFTGQGTNASETPATRMSIIQTDNFPAEPNYMGSRQQFVQSSSTFKDPERASLRDSGHGDSDQADSDQDTNKGSCCDMSVREALKMKTTSTKSQPLEQEPEECVNCTDECRVLGHSDRCWMPQFPAANQAENADYRTNLFVPTVEANVETETYETVNPTGKKTFCTFGKDKREHTILIANVKPYLKAKRALSPLLQEVPSASSSPTKACIEPCTSTKGSLDGCEAKPGALAEASSQYLPTDSQYLSPSKQPRDPPFMASDQMARVFADVHSRASRDSSEMGAVLEQLDHPNRDLGRESVDAEEVVREIDKLLQDCRGNDPVAVRK</sequence>
<keyword id="KW-0002">3D-structure</keyword>
<keyword id="KW-0025">Alternative splicing</keyword>
<keyword id="KW-0106">Calcium</keyword>
<keyword id="KW-0130">Cell adhesion</keyword>
<keyword id="KW-1003">Cell membrane</keyword>
<keyword id="KW-0325">Glycoprotein</keyword>
<keyword id="KW-0472">Membrane</keyword>
<keyword id="KW-1267">Proteomics identification</keyword>
<keyword id="KW-1185">Reference proteome</keyword>
<keyword id="KW-0677">Repeat</keyword>
<keyword id="KW-0732">Signal</keyword>
<keyword id="KW-0812">Transmembrane</keyword>
<keyword id="KW-1133">Transmembrane helix</keyword>
<evidence type="ECO:0000250" key="1"/>
<evidence type="ECO:0000255" key="2"/>
<evidence type="ECO:0000255" key="3">
    <source>
        <dbReference type="PROSITE-ProRule" id="PRU00043"/>
    </source>
</evidence>
<evidence type="ECO:0000256" key="4">
    <source>
        <dbReference type="SAM" id="MobiDB-lite"/>
    </source>
</evidence>
<evidence type="ECO:0000269" key="5">
    <source>
    </source>
</evidence>
<evidence type="ECO:0000303" key="6">
    <source ref="1"/>
</evidence>
<evidence type="ECO:0000305" key="7"/>
<accession>O14917</accession>
<accession>A8K1R5</accession>
<accession>Q5VVW9</accession>
<accession>Q5VVX0</accession>
<proteinExistence type="evidence at protein level"/>